<comment type="function">
    <text evidence="1">Catalyzes the phosphorylation of the hydroxyl group of 4-methyl-5-beta-hydroxyethylthiazole (THZ).</text>
</comment>
<comment type="catalytic activity">
    <reaction evidence="1">
        <text>5-(2-hydroxyethyl)-4-methylthiazole + ATP = 4-methyl-5-(2-phosphooxyethyl)-thiazole + ADP + H(+)</text>
        <dbReference type="Rhea" id="RHEA:24212"/>
        <dbReference type="ChEBI" id="CHEBI:15378"/>
        <dbReference type="ChEBI" id="CHEBI:17957"/>
        <dbReference type="ChEBI" id="CHEBI:30616"/>
        <dbReference type="ChEBI" id="CHEBI:58296"/>
        <dbReference type="ChEBI" id="CHEBI:456216"/>
        <dbReference type="EC" id="2.7.1.50"/>
    </reaction>
</comment>
<comment type="cofactor">
    <cofactor evidence="1">
        <name>Mg(2+)</name>
        <dbReference type="ChEBI" id="CHEBI:18420"/>
    </cofactor>
</comment>
<comment type="pathway">
    <text evidence="1">Cofactor biosynthesis; thiamine diphosphate biosynthesis; 4-methyl-5-(2-phosphoethyl)-thiazole from 5-(2-hydroxyethyl)-4-methylthiazole: step 1/1.</text>
</comment>
<comment type="similarity">
    <text evidence="1">Belongs to the Thz kinase family.</text>
</comment>
<accession>B1KW01</accession>
<organism>
    <name type="scientific">Clostridium botulinum (strain Loch Maree / Type A3)</name>
    <dbReference type="NCBI Taxonomy" id="498214"/>
    <lineage>
        <taxon>Bacteria</taxon>
        <taxon>Bacillati</taxon>
        <taxon>Bacillota</taxon>
        <taxon>Clostridia</taxon>
        <taxon>Eubacteriales</taxon>
        <taxon>Clostridiaceae</taxon>
        <taxon>Clostridium</taxon>
    </lineage>
</organism>
<feature type="chain" id="PRO_0000383846" description="Hydroxyethylthiazole kinase 1">
    <location>
        <begin position="1"/>
        <end position="265"/>
    </location>
</feature>
<feature type="binding site" evidence="1">
    <location>
        <position position="39"/>
    </location>
    <ligand>
        <name>substrate</name>
    </ligand>
</feature>
<feature type="binding site" evidence="1">
    <location>
        <position position="115"/>
    </location>
    <ligand>
        <name>ATP</name>
        <dbReference type="ChEBI" id="CHEBI:30616"/>
    </ligand>
</feature>
<feature type="binding site" evidence="1">
    <location>
        <position position="168"/>
    </location>
    <ligand>
        <name>ATP</name>
        <dbReference type="ChEBI" id="CHEBI:30616"/>
    </ligand>
</feature>
<feature type="binding site" evidence="1">
    <location>
        <position position="195"/>
    </location>
    <ligand>
        <name>substrate</name>
    </ligand>
</feature>
<gene>
    <name evidence="1" type="primary">thiM1</name>
    <name type="ordered locus">CLK_1695</name>
</gene>
<protein>
    <recommendedName>
        <fullName evidence="1">Hydroxyethylthiazole kinase 1</fullName>
        <ecNumber evidence="1">2.7.1.50</ecNumber>
    </recommendedName>
    <alternativeName>
        <fullName evidence="1">4-methyl-5-beta-hydroxyethylthiazole kinase 1</fullName>
        <shortName evidence="1">TH kinase 1</shortName>
        <shortName evidence="1">Thz kinase 1</shortName>
    </alternativeName>
</protein>
<name>THIM1_CLOBM</name>
<proteinExistence type="inferred from homology"/>
<dbReference type="EC" id="2.7.1.50" evidence="1"/>
<dbReference type="EMBL" id="CP000962">
    <property type="protein sequence ID" value="ACA54005.1"/>
    <property type="molecule type" value="Genomic_DNA"/>
</dbReference>
<dbReference type="RefSeq" id="WP_012342166.1">
    <property type="nucleotide sequence ID" value="NC_010520.1"/>
</dbReference>
<dbReference type="SMR" id="B1KW01"/>
<dbReference type="KEGG" id="cbl:CLK_1695"/>
<dbReference type="HOGENOM" id="CLU_019943_0_0_9"/>
<dbReference type="UniPathway" id="UPA00060">
    <property type="reaction ID" value="UER00139"/>
</dbReference>
<dbReference type="GO" id="GO:0005524">
    <property type="term" value="F:ATP binding"/>
    <property type="evidence" value="ECO:0007669"/>
    <property type="project" value="UniProtKB-UniRule"/>
</dbReference>
<dbReference type="GO" id="GO:0004417">
    <property type="term" value="F:hydroxyethylthiazole kinase activity"/>
    <property type="evidence" value="ECO:0007669"/>
    <property type="project" value="UniProtKB-UniRule"/>
</dbReference>
<dbReference type="GO" id="GO:0000287">
    <property type="term" value="F:magnesium ion binding"/>
    <property type="evidence" value="ECO:0007669"/>
    <property type="project" value="UniProtKB-UniRule"/>
</dbReference>
<dbReference type="GO" id="GO:0009228">
    <property type="term" value="P:thiamine biosynthetic process"/>
    <property type="evidence" value="ECO:0007669"/>
    <property type="project" value="UniProtKB-KW"/>
</dbReference>
<dbReference type="GO" id="GO:0009229">
    <property type="term" value="P:thiamine diphosphate biosynthetic process"/>
    <property type="evidence" value="ECO:0007669"/>
    <property type="project" value="UniProtKB-UniRule"/>
</dbReference>
<dbReference type="CDD" id="cd01170">
    <property type="entry name" value="THZ_kinase"/>
    <property type="match status" value="1"/>
</dbReference>
<dbReference type="Gene3D" id="3.40.1190.20">
    <property type="match status" value="1"/>
</dbReference>
<dbReference type="HAMAP" id="MF_00228">
    <property type="entry name" value="Thz_kinase"/>
    <property type="match status" value="1"/>
</dbReference>
<dbReference type="InterPro" id="IPR000417">
    <property type="entry name" value="Hyethyz_kinase"/>
</dbReference>
<dbReference type="InterPro" id="IPR029056">
    <property type="entry name" value="Ribokinase-like"/>
</dbReference>
<dbReference type="NCBIfam" id="NF006830">
    <property type="entry name" value="PRK09355.1"/>
    <property type="match status" value="1"/>
</dbReference>
<dbReference type="Pfam" id="PF02110">
    <property type="entry name" value="HK"/>
    <property type="match status" value="1"/>
</dbReference>
<dbReference type="PIRSF" id="PIRSF000513">
    <property type="entry name" value="Thz_kinase"/>
    <property type="match status" value="1"/>
</dbReference>
<dbReference type="PRINTS" id="PR01099">
    <property type="entry name" value="HYETHTZKNASE"/>
</dbReference>
<dbReference type="SUPFAM" id="SSF53613">
    <property type="entry name" value="Ribokinase-like"/>
    <property type="match status" value="1"/>
</dbReference>
<reference key="1">
    <citation type="journal article" date="2007" name="PLoS ONE">
        <title>Analysis of the neurotoxin complex genes in Clostridium botulinum A1-A4 and B1 strains: BoNT/A3, /Ba4 and /B1 clusters are located within plasmids.</title>
        <authorList>
            <person name="Smith T.J."/>
            <person name="Hill K.K."/>
            <person name="Foley B.T."/>
            <person name="Detter J.C."/>
            <person name="Munk A.C."/>
            <person name="Bruce D.C."/>
            <person name="Doggett N.A."/>
            <person name="Smith L.A."/>
            <person name="Marks J.D."/>
            <person name="Xie G."/>
            <person name="Brettin T.S."/>
        </authorList>
    </citation>
    <scope>NUCLEOTIDE SEQUENCE [LARGE SCALE GENOMIC DNA]</scope>
    <source>
        <strain>Loch Maree / Type A3</strain>
    </source>
</reference>
<keyword id="KW-0067">ATP-binding</keyword>
<keyword id="KW-0418">Kinase</keyword>
<keyword id="KW-0460">Magnesium</keyword>
<keyword id="KW-0479">Metal-binding</keyword>
<keyword id="KW-0547">Nucleotide-binding</keyword>
<keyword id="KW-0784">Thiamine biosynthesis</keyword>
<keyword id="KW-0808">Transferase</keyword>
<sequence>MQIRQSVKFKKPLIHYITNPISINDCANMILAVGAKPIMAEHPLEVSEITSISESLGINLGNITDNKMKSMLISGKTSYEKKIPQVIDLVGVGCSKLRLDYAKKFISECHPNVIKGNMSEIKAIYGIKSSAKGIDVGECDIITEQNFDENIEMIKRLSMETDSVVAATGVVDIISNGTYTYIISNGCEMLSMITGTGSMLTGIIASYISSGNILEGTALAIAIMGICGELSQNVKGTGSFRNELIDNMFSISDDIIIKKIRINSY</sequence>
<evidence type="ECO:0000255" key="1">
    <source>
        <dbReference type="HAMAP-Rule" id="MF_00228"/>
    </source>
</evidence>